<name>F210A_CHICK</name>
<gene>
    <name type="primary">FAM210A</name>
    <name type="ORF">RCJMB04_1k21</name>
</gene>
<organism>
    <name type="scientific">Gallus gallus</name>
    <name type="common">Chicken</name>
    <dbReference type="NCBI Taxonomy" id="9031"/>
    <lineage>
        <taxon>Eukaryota</taxon>
        <taxon>Metazoa</taxon>
        <taxon>Chordata</taxon>
        <taxon>Craniata</taxon>
        <taxon>Vertebrata</taxon>
        <taxon>Euteleostomi</taxon>
        <taxon>Archelosauria</taxon>
        <taxon>Archosauria</taxon>
        <taxon>Dinosauria</taxon>
        <taxon>Saurischia</taxon>
        <taxon>Theropoda</taxon>
        <taxon>Coelurosauria</taxon>
        <taxon>Aves</taxon>
        <taxon>Neognathae</taxon>
        <taxon>Galloanserae</taxon>
        <taxon>Galliformes</taxon>
        <taxon>Phasianidae</taxon>
        <taxon>Phasianinae</taxon>
        <taxon>Gallus</taxon>
    </lineage>
</organism>
<evidence type="ECO:0000250" key="1">
    <source>
        <dbReference type="UniProtKB" id="Q8BGY7"/>
    </source>
</evidence>
<evidence type="ECO:0000250" key="2">
    <source>
        <dbReference type="UniProtKB" id="Q96ND0"/>
    </source>
</evidence>
<evidence type="ECO:0000255" key="3"/>
<evidence type="ECO:0000256" key="4">
    <source>
        <dbReference type="SAM" id="MobiDB-lite"/>
    </source>
</evidence>
<evidence type="ECO:0000305" key="5"/>
<dbReference type="EMBL" id="AJ719368">
    <property type="protein sequence ID" value="CAG31027.1"/>
    <property type="molecule type" value="mRNA"/>
</dbReference>
<dbReference type="RefSeq" id="NP_001026185.1">
    <property type="nucleotide sequence ID" value="NM_001031014.1"/>
</dbReference>
<dbReference type="RefSeq" id="XP_015137949.1">
    <property type="nucleotide sequence ID" value="XM_015282463.1"/>
</dbReference>
<dbReference type="RefSeq" id="XP_015137950.1">
    <property type="nucleotide sequence ID" value="XM_015282464.1"/>
</dbReference>
<dbReference type="RefSeq" id="XP_046767497.1">
    <property type="nucleotide sequence ID" value="XM_046911541.1"/>
</dbReference>
<dbReference type="RefSeq" id="XP_046767498.1">
    <property type="nucleotide sequence ID" value="XM_046911542.1"/>
</dbReference>
<dbReference type="RefSeq" id="XP_046767499.1">
    <property type="nucleotide sequence ID" value="XM_046911543.1"/>
</dbReference>
<dbReference type="SMR" id="Q5ZML6"/>
<dbReference type="FunCoup" id="Q5ZML6">
    <property type="interactions" value="503"/>
</dbReference>
<dbReference type="STRING" id="9031.ENSGALP00000022477"/>
<dbReference type="PaxDb" id="9031-ENSGALP00000022477"/>
<dbReference type="GeneID" id="421045"/>
<dbReference type="KEGG" id="gga:421045"/>
<dbReference type="CTD" id="125228"/>
<dbReference type="VEuPathDB" id="HostDB:geneid_421045"/>
<dbReference type="eggNOG" id="KOG4082">
    <property type="taxonomic scope" value="Eukaryota"/>
</dbReference>
<dbReference type="HOGENOM" id="CLU_085747_0_0_1"/>
<dbReference type="InParanoid" id="Q5ZML6"/>
<dbReference type="OrthoDB" id="5874039at2759"/>
<dbReference type="PhylomeDB" id="Q5ZML6"/>
<dbReference type="TreeFam" id="TF313283"/>
<dbReference type="PRO" id="PR:Q5ZML6"/>
<dbReference type="Proteomes" id="UP000000539">
    <property type="component" value="Chromosome 2"/>
</dbReference>
<dbReference type="Bgee" id="ENSGALG00000013887">
    <property type="expression patterns" value="Expressed in skeletal muscle tissue and 13 other cell types or tissues"/>
</dbReference>
<dbReference type="GO" id="GO:0005737">
    <property type="term" value="C:cytoplasm"/>
    <property type="evidence" value="ECO:0000250"/>
    <property type="project" value="UniProtKB"/>
</dbReference>
<dbReference type="GO" id="GO:0016020">
    <property type="term" value="C:membrane"/>
    <property type="evidence" value="ECO:0007669"/>
    <property type="project" value="UniProtKB-SubCell"/>
</dbReference>
<dbReference type="GO" id="GO:0005739">
    <property type="term" value="C:mitochondrion"/>
    <property type="evidence" value="ECO:0000250"/>
    <property type="project" value="UniProtKB"/>
</dbReference>
<dbReference type="Gene3D" id="6.10.140.1430">
    <property type="match status" value="1"/>
</dbReference>
<dbReference type="InterPro" id="IPR045866">
    <property type="entry name" value="FAM210A/B-like"/>
</dbReference>
<dbReference type="InterPro" id="IPR009688">
    <property type="entry name" value="FAM210A/B-like_dom"/>
</dbReference>
<dbReference type="PANTHER" id="PTHR21377:SF1">
    <property type="entry name" value="PROTEIN FAM210A"/>
    <property type="match status" value="1"/>
</dbReference>
<dbReference type="PANTHER" id="PTHR21377">
    <property type="entry name" value="PROTEIN FAM210B, MITOCHONDRIAL"/>
    <property type="match status" value="1"/>
</dbReference>
<dbReference type="Pfam" id="PF06916">
    <property type="entry name" value="FAM210A-B_dom"/>
    <property type="match status" value="1"/>
</dbReference>
<dbReference type="SUPFAM" id="SSF47162">
    <property type="entry name" value="Apolipoprotein"/>
    <property type="match status" value="1"/>
</dbReference>
<sequence length="275" mass="30449">MQRSVLHTASQLAHGMCLLFPRTGAFRGLKGPSVSSNVGCKVILALDPPKRCLHAGAALFASKSSAVSSQPADTPRKVPEEREPLTSATEVPKQSPVESDASDPDPLQDKSISLVQRFKKTFKQYGKVMIPVHLVTSTVWFGSFYYAAMKGVNVVPFLELIGLPDSIVDILKNSQSGNALTAYALYKIATPARYTVTLGGTSITVKYLRKNGYMSTPPPVKEYLQDRMEETKDKITEKMEETKDKITEKMEETKDKITEKIQETKDKVSFKKIKD</sequence>
<protein>
    <recommendedName>
        <fullName>Protein FAM210A</fullName>
    </recommendedName>
</protein>
<comment type="function">
    <text evidence="1">May play a role in the structure and strength of both muscle and bone.</text>
</comment>
<comment type="subunit">
    <text evidence="2">Interacts with ATAD3A.</text>
</comment>
<comment type="subcellular location">
    <subcellularLocation>
        <location evidence="3">Membrane</location>
        <topology evidence="3">Single-pass membrane protein</topology>
    </subcellularLocation>
    <subcellularLocation>
        <location evidence="1">Mitochondrion</location>
    </subcellularLocation>
    <subcellularLocation>
        <location evidence="1">Cytoplasm</location>
    </subcellularLocation>
</comment>
<comment type="similarity">
    <text evidence="5">Belongs to the FAM210 family.</text>
</comment>
<proteinExistence type="evidence at transcript level"/>
<feature type="chain" id="PRO_0000274428" description="Protein FAM210A">
    <location>
        <begin position="1"/>
        <end position="275"/>
    </location>
</feature>
<feature type="transmembrane region" description="Helical" evidence="3">
    <location>
        <begin position="128"/>
        <end position="148"/>
    </location>
</feature>
<feature type="domain" description="DUF1279">
    <location>
        <begin position="109"/>
        <end position="221"/>
    </location>
</feature>
<feature type="region of interest" description="Disordered" evidence="4">
    <location>
        <begin position="68"/>
        <end position="108"/>
    </location>
</feature>
<feature type="coiled-coil region" evidence="3">
    <location>
        <begin position="221"/>
        <end position="271"/>
    </location>
</feature>
<feature type="compositionally biased region" description="Basic and acidic residues" evidence="4">
    <location>
        <begin position="74"/>
        <end position="84"/>
    </location>
</feature>
<accession>Q5ZML6</accession>
<keyword id="KW-0175">Coiled coil</keyword>
<keyword id="KW-0963">Cytoplasm</keyword>
<keyword id="KW-0472">Membrane</keyword>
<keyword id="KW-0496">Mitochondrion</keyword>
<keyword id="KW-1185">Reference proteome</keyword>
<keyword id="KW-0812">Transmembrane</keyword>
<keyword id="KW-1133">Transmembrane helix</keyword>
<reference key="1">
    <citation type="journal article" date="2005" name="Genome Biol.">
        <title>Full-length cDNAs from chicken bursal lymphocytes to facilitate gene function analysis.</title>
        <authorList>
            <person name="Caldwell R.B."/>
            <person name="Kierzek A.M."/>
            <person name="Arakawa H."/>
            <person name="Bezzubov Y."/>
            <person name="Zaim J."/>
            <person name="Fiedler P."/>
            <person name="Kutter S."/>
            <person name="Blagodatski A."/>
            <person name="Kostovska D."/>
            <person name="Koter M."/>
            <person name="Plachy J."/>
            <person name="Carninci P."/>
            <person name="Hayashizaki Y."/>
            <person name="Buerstedde J.-M."/>
        </authorList>
    </citation>
    <scope>NUCLEOTIDE SEQUENCE [LARGE SCALE MRNA]</scope>
    <source>
        <strain>CB</strain>
        <tissue>Bursa of Fabricius</tissue>
    </source>
</reference>